<reference key="1">
    <citation type="journal article" date="2002" name="Genome Res.">
        <title>The genome of Methanosarcina acetivorans reveals extensive metabolic and physiological diversity.</title>
        <authorList>
            <person name="Galagan J.E."/>
            <person name="Nusbaum C."/>
            <person name="Roy A."/>
            <person name="Endrizzi M.G."/>
            <person name="Macdonald P."/>
            <person name="FitzHugh W."/>
            <person name="Calvo S."/>
            <person name="Engels R."/>
            <person name="Smirnov S."/>
            <person name="Atnoor D."/>
            <person name="Brown A."/>
            <person name="Allen N."/>
            <person name="Naylor J."/>
            <person name="Stange-Thomann N."/>
            <person name="DeArellano K."/>
            <person name="Johnson R."/>
            <person name="Linton L."/>
            <person name="McEwan P."/>
            <person name="McKernan K."/>
            <person name="Talamas J."/>
            <person name="Tirrell A."/>
            <person name="Ye W."/>
            <person name="Zimmer A."/>
            <person name="Barber R.D."/>
            <person name="Cann I."/>
            <person name="Graham D.E."/>
            <person name="Grahame D.A."/>
            <person name="Guss A.M."/>
            <person name="Hedderich R."/>
            <person name="Ingram-Smith C."/>
            <person name="Kuettner H.C."/>
            <person name="Krzycki J.A."/>
            <person name="Leigh J.A."/>
            <person name="Li W."/>
            <person name="Liu J."/>
            <person name="Mukhopadhyay B."/>
            <person name="Reeve J.N."/>
            <person name="Smith K."/>
            <person name="Springer T.A."/>
            <person name="Umayam L.A."/>
            <person name="White O."/>
            <person name="White R.H."/>
            <person name="de Macario E.C."/>
            <person name="Ferry J.G."/>
            <person name="Jarrell K.F."/>
            <person name="Jing H."/>
            <person name="Macario A.J.L."/>
            <person name="Paulsen I.T."/>
            <person name="Pritchett M."/>
            <person name="Sowers K.R."/>
            <person name="Swanson R.V."/>
            <person name="Zinder S.H."/>
            <person name="Lander E."/>
            <person name="Metcalf W.W."/>
            <person name="Birren B."/>
        </authorList>
    </citation>
    <scope>NUCLEOTIDE SEQUENCE [LARGE SCALE GENOMIC DNA]</scope>
    <source>
        <strain>ATCC 35395 / DSM 2834 / JCM 12185 / C2A</strain>
    </source>
</reference>
<sequence length="304" mass="33889">MQQADLIKRIQELKVKRNAVILSHYYSRPEVQDIADFVGDSLALSQEAVRQDADVIVFCGVHFMGESAAILSPKKTVLLPEIDSTCPMADMVDVEGLKRLKEKHPEAPVVSYVNSSAAIKAESYICCTSANAVEVVNSLDVDEVIFVPDKNLAAYVASRTDKKIIPWEGHCPTHHQILREDVLKMKEKHPLAKFIAHPECRPDVLELADHVASTRGMIMYAKNSPAREFIIGTECGLIHGLHKAAPEKTYYCISEFACCPSMKMVNLEKLLASLEKMQHVVTVPEEVRVRAKEALDRMLAVKVK</sequence>
<organism>
    <name type="scientific">Methanosarcina acetivorans (strain ATCC 35395 / DSM 2834 / JCM 12185 / C2A)</name>
    <dbReference type="NCBI Taxonomy" id="188937"/>
    <lineage>
        <taxon>Archaea</taxon>
        <taxon>Methanobacteriati</taxon>
        <taxon>Methanobacteriota</taxon>
        <taxon>Stenosarchaea group</taxon>
        <taxon>Methanomicrobia</taxon>
        <taxon>Methanosarcinales</taxon>
        <taxon>Methanosarcinaceae</taxon>
        <taxon>Methanosarcina</taxon>
    </lineage>
</organism>
<evidence type="ECO:0000255" key="1">
    <source>
        <dbReference type="HAMAP-Rule" id="MF_00568"/>
    </source>
</evidence>
<dbReference type="EC" id="2.5.1.72" evidence="1"/>
<dbReference type="EMBL" id="AE010299">
    <property type="protein sequence ID" value="AAM04392.1"/>
    <property type="molecule type" value="Genomic_DNA"/>
</dbReference>
<dbReference type="RefSeq" id="WP_011020997.1">
    <property type="nucleotide sequence ID" value="NC_003552.1"/>
</dbReference>
<dbReference type="SMR" id="Q8TS46"/>
<dbReference type="FunCoup" id="Q8TS46">
    <property type="interactions" value="95"/>
</dbReference>
<dbReference type="STRING" id="188937.MA_0959"/>
<dbReference type="EnsemblBacteria" id="AAM04392">
    <property type="protein sequence ID" value="AAM04392"/>
    <property type="gene ID" value="MA_0959"/>
</dbReference>
<dbReference type="GeneID" id="1472849"/>
<dbReference type="KEGG" id="mac:MA_0959"/>
<dbReference type="HOGENOM" id="CLU_047382_0_0_2"/>
<dbReference type="InParanoid" id="Q8TS46"/>
<dbReference type="OrthoDB" id="5931at2157"/>
<dbReference type="PhylomeDB" id="Q8TS46"/>
<dbReference type="UniPathway" id="UPA00253">
    <property type="reaction ID" value="UER00327"/>
</dbReference>
<dbReference type="Proteomes" id="UP000002487">
    <property type="component" value="Chromosome"/>
</dbReference>
<dbReference type="GO" id="GO:0005737">
    <property type="term" value="C:cytoplasm"/>
    <property type="evidence" value="ECO:0007669"/>
    <property type="project" value="UniProtKB-SubCell"/>
</dbReference>
<dbReference type="GO" id="GO:0051539">
    <property type="term" value="F:4 iron, 4 sulfur cluster binding"/>
    <property type="evidence" value="ECO:0000318"/>
    <property type="project" value="GO_Central"/>
</dbReference>
<dbReference type="GO" id="GO:0046872">
    <property type="term" value="F:metal ion binding"/>
    <property type="evidence" value="ECO:0007669"/>
    <property type="project" value="UniProtKB-KW"/>
</dbReference>
<dbReference type="GO" id="GO:0008987">
    <property type="term" value="F:quinolinate synthetase A activity"/>
    <property type="evidence" value="ECO:0000318"/>
    <property type="project" value="GO_Central"/>
</dbReference>
<dbReference type="GO" id="GO:0034628">
    <property type="term" value="P:'de novo' NAD biosynthetic process from L-aspartate"/>
    <property type="evidence" value="ECO:0000318"/>
    <property type="project" value="GO_Central"/>
</dbReference>
<dbReference type="FunFam" id="3.40.50.10800:FF:000003">
    <property type="entry name" value="Quinolinate synthase A"/>
    <property type="match status" value="1"/>
</dbReference>
<dbReference type="Gene3D" id="3.40.50.10800">
    <property type="entry name" value="NadA-like"/>
    <property type="match status" value="3"/>
</dbReference>
<dbReference type="HAMAP" id="MF_00568">
    <property type="entry name" value="NadA_type2"/>
    <property type="match status" value="1"/>
</dbReference>
<dbReference type="InterPro" id="IPR003473">
    <property type="entry name" value="NadA"/>
</dbReference>
<dbReference type="InterPro" id="IPR036094">
    <property type="entry name" value="NadA_sf"/>
</dbReference>
<dbReference type="InterPro" id="IPR023066">
    <property type="entry name" value="Quinolinate_synth_type2"/>
</dbReference>
<dbReference type="NCBIfam" id="TIGR00550">
    <property type="entry name" value="nadA"/>
    <property type="match status" value="1"/>
</dbReference>
<dbReference type="NCBIfam" id="NF006878">
    <property type="entry name" value="PRK09375.1-2"/>
    <property type="match status" value="1"/>
</dbReference>
<dbReference type="NCBIfam" id="NF006879">
    <property type="entry name" value="PRK09375.1-4"/>
    <property type="match status" value="1"/>
</dbReference>
<dbReference type="PANTHER" id="PTHR30573:SF0">
    <property type="entry name" value="QUINOLINATE SYNTHASE, CHLOROPLASTIC"/>
    <property type="match status" value="1"/>
</dbReference>
<dbReference type="PANTHER" id="PTHR30573">
    <property type="entry name" value="QUINOLINATE SYNTHETASE A"/>
    <property type="match status" value="1"/>
</dbReference>
<dbReference type="Pfam" id="PF02445">
    <property type="entry name" value="NadA"/>
    <property type="match status" value="1"/>
</dbReference>
<dbReference type="SUPFAM" id="SSF142754">
    <property type="entry name" value="NadA-like"/>
    <property type="match status" value="1"/>
</dbReference>
<keyword id="KW-0004">4Fe-4S</keyword>
<keyword id="KW-0963">Cytoplasm</keyword>
<keyword id="KW-0408">Iron</keyword>
<keyword id="KW-0411">Iron-sulfur</keyword>
<keyword id="KW-0479">Metal-binding</keyword>
<keyword id="KW-0662">Pyridine nucleotide biosynthesis</keyword>
<keyword id="KW-1185">Reference proteome</keyword>
<keyword id="KW-0808">Transferase</keyword>
<proteinExistence type="inferred from homology"/>
<name>NADA1_METAC</name>
<accession>Q8TS46</accession>
<feature type="chain" id="PRO_0000155801" description="Quinolinate synthase 1">
    <location>
        <begin position="1"/>
        <end position="304"/>
    </location>
</feature>
<feature type="binding site" evidence="1">
    <location>
        <position position="24"/>
    </location>
    <ligand>
        <name>iminosuccinate</name>
        <dbReference type="ChEBI" id="CHEBI:77875"/>
    </ligand>
</feature>
<feature type="binding site" evidence="1">
    <location>
        <position position="41"/>
    </location>
    <ligand>
        <name>iminosuccinate</name>
        <dbReference type="ChEBI" id="CHEBI:77875"/>
    </ligand>
</feature>
<feature type="binding site" evidence="1">
    <location>
        <position position="86"/>
    </location>
    <ligand>
        <name>[4Fe-4S] cluster</name>
        <dbReference type="ChEBI" id="CHEBI:49883"/>
    </ligand>
</feature>
<feature type="binding site" evidence="1">
    <location>
        <begin position="112"/>
        <end position="114"/>
    </location>
    <ligand>
        <name>iminosuccinate</name>
        <dbReference type="ChEBI" id="CHEBI:77875"/>
    </ligand>
</feature>
<feature type="binding site" evidence="1">
    <location>
        <position position="129"/>
    </location>
    <ligand>
        <name>iminosuccinate</name>
        <dbReference type="ChEBI" id="CHEBI:77875"/>
    </ligand>
</feature>
<feature type="binding site" evidence="1">
    <location>
        <position position="171"/>
    </location>
    <ligand>
        <name>[4Fe-4S] cluster</name>
        <dbReference type="ChEBI" id="CHEBI:49883"/>
    </ligand>
</feature>
<feature type="binding site" evidence="1">
    <location>
        <begin position="197"/>
        <end position="199"/>
    </location>
    <ligand>
        <name>iminosuccinate</name>
        <dbReference type="ChEBI" id="CHEBI:77875"/>
    </ligand>
</feature>
<feature type="binding site" evidence="1">
    <location>
        <position position="214"/>
    </location>
    <ligand>
        <name>iminosuccinate</name>
        <dbReference type="ChEBI" id="CHEBI:77875"/>
    </ligand>
</feature>
<feature type="binding site" evidence="1">
    <location>
        <position position="259"/>
    </location>
    <ligand>
        <name>[4Fe-4S] cluster</name>
        <dbReference type="ChEBI" id="CHEBI:49883"/>
    </ligand>
</feature>
<protein>
    <recommendedName>
        <fullName evidence="1">Quinolinate synthase 1</fullName>
        <ecNumber evidence="1">2.5.1.72</ecNumber>
    </recommendedName>
</protein>
<gene>
    <name evidence="1" type="primary">nadA1</name>
    <name type="ordered locus">MA_0959</name>
</gene>
<comment type="function">
    <text evidence="1">Catalyzes the condensation of iminoaspartate with dihydroxyacetone phosphate to form quinolinate.</text>
</comment>
<comment type="catalytic activity">
    <reaction evidence="1">
        <text>iminosuccinate + dihydroxyacetone phosphate = quinolinate + phosphate + 2 H2O + H(+)</text>
        <dbReference type="Rhea" id="RHEA:25888"/>
        <dbReference type="ChEBI" id="CHEBI:15377"/>
        <dbReference type="ChEBI" id="CHEBI:15378"/>
        <dbReference type="ChEBI" id="CHEBI:29959"/>
        <dbReference type="ChEBI" id="CHEBI:43474"/>
        <dbReference type="ChEBI" id="CHEBI:57642"/>
        <dbReference type="ChEBI" id="CHEBI:77875"/>
        <dbReference type="EC" id="2.5.1.72"/>
    </reaction>
    <physiologicalReaction direction="left-to-right" evidence="1">
        <dbReference type="Rhea" id="RHEA:25889"/>
    </physiologicalReaction>
</comment>
<comment type="cofactor">
    <cofactor evidence="1">
        <name>[4Fe-4S] cluster</name>
        <dbReference type="ChEBI" id="CHEBI:49883"/>
    </cofactor>
    <text evidence="1">Binds 1 [4Fe-4S] cluster per subunit.</text>
</comment>
<comment type="pathway">
    <text evidence="1">Cofactor biosynthesis; NAD(+) biosynthesis; quinolinate from iminoaspartate: step 1/1.</text>
</comment>
<comment type="subcellular location">
    <subcellularLocation>
        <location evidence="1">Cytoplasm</location>
    </subcellularLocation>
</comment>
<comment type="similarity">
    <text evidence="1">Belongs to the quinolinate synthase family. Type 2 subfamily.</text>
</comment>